<dbReference type="EC" id="2.7.7.6" evidence="1"/>
<dbReference type="EMBL" id="AE004969">
    <property type="protein sequence ID" value="AAW90471.1"/>
    <property type="molecule type" value="Genomic_DNA"/>
</dbReference>
<dbReference type="RefSeq" id="WP_003700598.1">
    <property type="nucleotide sequence ID" value="NC_002946.2"/>
</dbReference>
<dbReference type="RefSeq" id="YP_208883.1">
    <property type="nucleotide sequence ID" value="NC_002946.2"/>
</dbReference>
<dbReference type="SMR" id="Q5F5R6"/>
<dbReference type="STRING" id="242231.NGO_1850"/>
<dbReference type="KEGG" id="ngo:NGO_1850"/>
<dbReference type="PATRIC" id="fig|242231.10.peg.2224"/>
<dbReference type="HOGENOM" id="CLU_000524_3_1_4"/>
<dbReference type="Proteomes" id="UP000000535">
    <property type="component" value="Chromosome"/>
</dbReference>
<dbReference type="GO" id="GO:0000428">
    <property type="term" value="C:DNA-directed RNA polymerase complex"/>
    <property type="evidence" value="ECO:0007669"/>
    <property type="project" value="UniProtKB-KW"/>
</dbReference>
<dbReference type="GO" id="GO:0003677">
    <property type="term" value="F:DNA binding"/>
    <property type="evidence" value="ECO:0007669"/>
    <property type="project" value="UniProtKB-UniRule"/>
</dbReference>
<dbReference type="GO" id="GO:0003899">
    <property type="term" value="F:DNA-directed RNA polymerase activity"/>
    <property type="evidence" value="ECO:0007669"/>
    <property type="project" value="UniProtKB-UniRule"/>
</dbReference>
<dbReference type="GO" id="GO:0000287">
    <property type="term" value="F:magnesium ion binding"/>
    <property type="evidence" value="ECO:0007669"/>
    <property type="project" value="UniProtKB-UniRule"/>
</dbReference>
<dbReference type="GO" id="GO:0008270">
    <property type="term" value="F:zinc ion binding"/>
    <property type="evidence" value="ECO:0007669"/>
    <property type="project" value="UniProtKB-UniRule"/>
</dbReference>
<dbReference type="GO" id="GO:0006351">
    <property type="term" value="P:DNA-templated transcription"/>
    <property type="evidence" value="ECO:0007669"/>
    <property type="project" value="UniProtKB-UniRule"/>
</dbReference>
<dbReference type="CDD" id="cd02655">
    <property type="entry name" value="RNAP_beta'_C"/>
    <property type="match status" value="1"/>
</dbReference>
<dbReference type="CDD" id="cd01609">
    <property type="entry name" value="RNAP_beta'_N"/>
    <property type="match status" value="1"/>
</dbReference>
<dbReference type="FunFam" id="1.10.132.30:FF:000003">
    <property type="entry name" value="DNA-directed RNA polymerase subunit beta"/>
    <property type="match status" value="1"/>
</dbReference>
<dbReference type="FunFam" id="1.10.150.390:FF:000002">
    <property type="entry name" value="DNA-directed RNA polymerase subunit beta"/>
    <property type="match status" value="1"/>
</dbReference>
<dbReference type="FunFam" id="4.10.860.120:FF:000001">
    <property type="entry name" value="DNA-directed RNA polymerase subunit beta"/>
    <property type="match status" value="1"/>
</dbReference>
<dbReference type="Gene3D" id="1.10.132.30">
    <property type="match status" value="1"/>
</dbReference>
<dbReference type="Gene3D" id="1.10.150.390">
    <property type="match status" value="1"/>
</dbReference>
<dbReference type="Gene3D" id="1.10.1790.20">
    <property type="match status" value="1"/>
</dbReference>
<dbReference type="Gene3D" id="1.10.40.90">
    <property type="match status" value="1"/>
</dbReference>
<dbReference type="Gene3D" id="2.40.40.20">
    <property type="match status" value="1"/>
</dbReference>
<dbReference type="Gene3D" id="2.40.50.100">
    <property type="match status" value="3"/>
</dbReference>
<dbReference type="Gene3D" id="4.10.860.120">
    <property type="entry name" value="RNA polymerase II, clamp domain"/>
    <property type="match status" value="1"/>
</dbReference>
<dbReference type="Gene3D" id="1.10.274.100">
    <property type="entry name" value="RNA polymerase Rpb1, domain 3"/>
    <property type="match status" value="1"/>
</dbReference>
<dbReference type="HAMAP" id="MF_01322">
    <property type="entry name" value="RNApol_bact_RpoC"/>
    <property type="match status" value="1"/>
</dbReference>
<dbReference type="InterPro" id="IPR045867">
    <property type="entry name" value="DNA-dir_RpoC_beta_prime"/>
</dbReference>
<dbReference type="InterPro" id="IPR012754">
    <property type="entry name" value="DNA-dir_RpoC_beta_prime_bact"/>
</dbReference>
<dbReference type="InterPro" id="IPR000722">
    <property type="entry name" value="RNA_pol_asu"/>
</dbReference>
<dbReference type="InterPro" id="IPR006592">
    <property type="entry name" value="RNA_pol_N"/>
</dbReference>
<dbReference type="InterPro" id="IPR007080">
    <property type="entry name" value="RNA_pol_Rpb1_1"/>
</dbReference>
<dbReference type="InterPro" id="IPR007066">
    <property type="entry name" value="RNA_pol_Rpb1_3"/>
</dbReference>
<dbReference type="InterPro" id="IPR042102">
    <property type="entry name" value="RNA_pol_Rpb1_3_sf"/>
</dbReference>
<dbReference type="InterPro" id="IPR007083">
    <property type="entry name" value="RNA_pol_Rpb1_4"/>
</dbReference>
<dbReference type="InterPro" id="IPR007081">
    <property type="entry name" value="RNA_pol_Rpb1_5"/>
</dbReference>
<dbReference type="InterPro" id="IPR044893">
    <property type="entry name" value="RNA_pol_Rpb1_clamp_domain"/>
</dbReference>
<dbReference type="InterPro" id="IPR038120">
    <property type="entry name" value="Rpb1_funnel_sf"/>
</dbReference>
<dbReference type="NCBIfam" id="TIGR02386">
    <property type="entry name" value="rpoC_TIGR"/>
    <property type="match status" value="1"/>
</dbReference>
<dbReference type="PANTHER" id="PTHR19376">
    <property type="entry name" value="DNA-DIRECTED RNA POLYMERASE"/>
    <property type="match status" value="1"/>
</dbReference>
<dbReference type="PANTHER" id="PTHR19376:SF54">
    <property type="entry name" value="DNA-DIRECTED RNA POLYMERASE SUBUNIT BETA"/>
    <property type="match status" value="1"/>
</dbReference>
<dbReference type="Pfam" id="PF04997">
    <property type="entry name" value="RNA_pol_Rpb1_1"/>
    <property type="match status" value="1"/>
</dbReference>
<dbReference type="Pfam" id="PF00623">
    <property type="entry name" value="RNA_pol_Rpb1_2"/>
    <property type="match status" value="2"/>
</dbReference>
<dbReference type="Pfam" id="PF04983">
    <property type="entry name" value="RNA_pol_Rpb1_3"/>
    <property type="match status" value="1"/>
</dbReference>
<dbReference type="Pfam" id="PF05000">
    <property type="entry name" value="RNA_pol_Rpb1_4"/>
    <property type="match status" value="1"/>
</dbReference>
<dbReference type="Pfam" id="PF04998">
    <property type="entry name" value="RNA_pol_Rpb1_5"/>
    <property type="match status" value="1"/>
</dbReference>
<dbReference type="SMART" id="SM00663">
    <property type="entry name" value="RPOLA_N"/>
    <property type="match status" value="1"/>
</dbReference>
<dbReference type="SUPFAM" id="SSF64484">
    <property type="entry name" value="beta and beta-prime subunits of DNA dependent RNA-polymerase"/>
    <property type="match status" value="1"/>
</dbReference>
<organism>
    <name type="scientific">Neisseria gonorrhoeae (strain ATCC 700825 / FA 1090)</name>
    <dbReference type="NCBI Taxonomy" id="242231"/>
    <lineage>
        <taxon>Bacteria</taxon>
        <taxon>Pseudomonadati</taxon>
        <taxon>Pseudomonadota</taxon>
        <taxon>Betaproteobacteria</taxon>
        <taxon>Neisseriales</taxon>
        <taxon>Neisseriaceae</taxon>
        <taxon>Neisseria</taxon>
    </lineage>
</organism>
<accession>Q5F5R6</accession>
<reference key="1">
    <citation type="submission" date="2003-03" db="EMBL/GenBank/DDBJ databases">
        <title>The complete genome sequence of Neisseria gonorrhoeae.</title>
        <authorList>
            <person name="Lewis L.A."/>
            <person name="Gillaspy A.F."/>
            <person name="McLaughlin R.E."/>
            <person name="Gipson M."/>
            <person name="Ducey T.F."/>
            <person name="Ownbey T."/>
            <person name="Hartman K."/>
            <person name="Nydick C."/>
            <person name="Carson M.B."/>
            <person name="Vaughn J."/>
            <person name="Thomson C."/>
            <person name="Song L."/>
            <person name="Lin S."/>
            <person name="Yuan X."/>
            <person name="Najar F."/>
            <person name="Zhan M."/>
            <person name="Ren Q."/>
            <person name="Zhu H."/>
            <person name="Qi S."/>
            <person name="Kenton S.M."/>
            <person name="Lai H."/>
            <person name="White J.D."/>
            <person name="Clifton S."/>
            <person name="Roe B.A."/>
            <person name="Dyer D.W."/>
        </authorList>
    </citation>
    <scope>NUCLEOTIDE SEQUENCE [LARGE SCALE GENOMIC DNA]</scope>
    <source>
        <strain>ATCC 700825 / FA 1090</strain>
    </source>
</reference>
<proteinExistence type="inferred from homology"/>
<name>RPOC_NEIG1</name>
<sequence>MNLLNLFNPLQTAGMEEEFDAIKIGIASPETIRSWSYGEVKKPETINYRTFKPERDGLFCAKIFGPVKDYECLCGKYKRLKFKGVTCEKCGVEVTLSKVRRERMGHIELAAPVAHIWFLKSLPSRLGMVLNMTLRDIERVLYFEAFVVTDPGMTPLQRRQLLTEDDYYNKLDEYGDDFDAKMGAEGIRELLRTLDVAGEIEILRQELESTGSDTKIKKIAKRLKVLEAFHRSGMKLEWMIMDVLPVLPPDLRPLVPLDGGRFATSDLNDLYRRVINRNNRLKRLLELHAPDIIVRNEKRMLQEAVDSLLDNGRRGKAMTGANKRPLKSLADMIKGKGGRFRQNLLGKRVDYSGRSVITVGPYLRLHQCGLPKKMALELFKPFIFHKLEKQGLASTVKAAKKLVEQEVPEVWDILEEVIREHPIMLNRAPTLHRLGIQAFEPILIEGKAIQLHPLVCAAFNADFDGDQMAVHVPLSLEAQMEARTLMLASNNVLSPANGEPIIVPSQDIVLGLYYMTRDRINAKGEGSLFADVKEVHRAYHTKQVELGTKITVRLREWVKNEAGEFEPVVNRYETTVGRALLSEILPKGLPFEYVNKALKKKEISKLINASFRLCGLRDTVIFADHLMYTGFGFAAKGGISIAVDDMEIPKEKAALLAEANAEVKEIEDQYRQGLVTNGERYNKVVDIWGRAGDKIAKAMMDNLSKQKVIDRDGNEVDQESFNSIYMMADSGARGSAAQIKQLSGMRGLMAKPDGSIIETPITSNFREGLTVLQYFIATHGARKGLADTALKTANSGYLTRRLVDVTQDLVVVEDDCGTSDGFVMKAVVQGGDVIEALRDRILGRVTASDVVDPSSGETLVEAGTLLTEKLVDMIDQSGVDEVKVRTPITCKTRHGLCAHCYGRDLARGKLVNAGEAVGVIAAQSIGEPGTQLTMRTFHIGGAASRAAAASQVEAKSNGTARFSSQMRYVANNKGELVVIGRSCEVVIHDDIGRERERHKVPYGAILLVQDGMAIKAGQTLATWDPHTRPMITEHAGMVKFENMEEGVTVAKQTDDVTGLSTLVVIDGKRRSSSASKLLRPTVKLLDENGVEICIPGTSTPVSMAFPVGAVITVREGQEIGKGDVLARIPQASSKTRDITGGLPRVAELFEARVPKDAGMLAEITGTVSFGKETKGKQRLIITDVDGVAYETLISKEKQILVHDGQVVNRGETIVDGAVDPHDILRLQGIEALARYIVQEVQEVYRLQGVKISDKHIEVIIRQMLRRVNIADAGETGFITGEQVERGDVMAANEKALEEGKEPARYENILLGITKASLSTDSFISAASFQETTRVLTEAAIMGKQDELRGLKENVIVGRLIPAGTGLTYHRSRHQQWQGVEQETAETQVTDE</sequence>
<protein>
    <recommendedName>
        <fullName evidence="1">DNA-directed RNA polymerase subunit beta'</fullName>
        <shortName evidence="1">RNAP subunit beta'</shortName>
        <ecNumber evidence="1">2.7.7.6</ecNumber>
    </recommendedName>
    <alternativeName>
        <fullName evidence="1">RNA polymerase subunit beta'</fullName>
    </alternativeName>
    <alternativeName>
        <fullName evidence="1">Transcriptase subunit beta'</fullName>
    </alternativeName>
</protein>
<keyword id="KW-0240">DNA-directed RNA polymerase</keyword>
<keyword id="KW-0460">Magnesium</keyword>
<keyword id="KW-0479">Metal-binding</keyword>
<keyword id="KW-0548">Nucleotidyltransferase</keyword>
<keyword id="KW-1185">Reference proteome</keyword>
<keyword id="KW-0804">Transcription</keyword>
<keyword id="KW-0808">Transferase</keyword>
<keyword id="KW-0862">Zinc</keyword>
<comment type="function">
    <text evidence="1">DNA-dependent RNA polymerase catalyzes the transcription of DNA into RNA using the four ribonucleoside triphosphates as substrates.</text>
</comment>
<comment type="catalytic activity">
    <reaction evidence="1">
        <text>RNA(n) + a ribonucleoside 5'-triphosphate = RNA(n+1) + diphosphate</text>
        <dbReference type="Rhea" id="RHEA:21248"/>
        <dbReference type="Rhea" id="RHEA-COMP:14527"/>
        <dbReference type="Rhea" id="RHEA-COMP:17342"/>
        <dbReference type="ChEBI" id="CHEBI:33019"/>
        <dbReference type="ChEBI" id="CHEBI:61557"/>
        <dbReference type="ChEBI" id="CHEBI:140395"/>
        <dbReference type="EC" id="2.7.7.6"/>
    </reaction>
</comment>
<comment type="cofactor">
    <cofactor evidence="1">
        <name>Mg(2+)</name>
        <dbReference type="ChEBI" id="CHEBI:18420"/>
    </cofactor>
    <text evidence="1">Binds 1 Mg(2+) ion per subunit.</text>
</comment>
<comment type="cofactor">
    <cofactor evidence="1">
        <name>Zn(2+)</name>
        <dbReference type="ChEBI" id="CHEBI:29105"/>
    </cofactor>
    <text evidence="1">Binds 2 Zn(2+) ions per subunit.</text>
</comment>
<comment type="subunit">
    <text evidence="1">The RNAP catalytic core consists of 2 alpha, 1 beta, 1 beta' and 1 omega subunit. When a sigma factor is associated with the core the holoenzyme is formed, which can initiate transcription.</text>
</comment>
<comment type="similarity">
    <text evidence="1">Belongs to the RNA polymerase beta' chain family.</text>
</comment>
<evidence type="ECO:0000255" key="1">
    <source>
        <dbReference type="HAMAP-Rule" id="MF_01322"/>
    </source>
</evidence>
<feature type="chain" id="PRO_0000225555" description="DNA-directed RNA polymerase subunit beta'">
    <location>
        <begin position="1"/>
        <end position="1391"/>
    </location>
</feature>
<feature type="binding site" evidence="1">
    <location>
        <position position="72"/>
    </location>
    <ligand>
        <name>Zn(2+)</name>
        <dbReference type="ChEBI" id="CHEBI:29105"/>
        <label>1</label>
    </ligand>
</feature>
<feature type="binding site" evidence="1">
    <location>
        <position position="74"/>
    </location>
    <ligand>
        <name>Zn(2+)</name>
        <dbReference type="ChEBI" id="CHEBI:29105"/>
        <label>1</label>
    </ligand>
</feature>
<feature type="binding site" evidence="1">
    <location>
        <position position="87"/>
    </location>
    <ligand>
        <name>Zn(2+)</name>
        <dbReference type="ChEBI" id="CHEBI:29105"/>
        <label>1</label>
    </ligand>
</feature>
<feature type="binding site" evidence="1">
    <location>
        <position position="90"/>
    </location>
    <ligand>
        <name>Zn(2+)</name>
        <dbReference type="ChEBI" id="CHEBI:29105"/>
        <label>1</label>
    </ligand>
</feature>
<feature type="binding site" evidence="1">
    <location>
        <position position="462"/>
    </location>
    <ligand>
        <name>Mg(2+)</name>
        <dbReference type="ChEBI" id="CHEBI:18420"/>
    </ligand>
</feature>
<feature type="binding site" evidence="1">
    <location>
        <position position="464"/>
    </location>
    <ligand>
        <name>Mg(2+)</name>
        <dbReference type="ChEBI" id="CHEBI:18420"/>
    </ligand>
</feature>
<feature type="binding site" evidence="1">
    <location>
        <position position="466"/>
    </location>
    <ligand>
        <name>Mg(2+)</name>
        <dbReference type="ChEBI" id="CHEBI:18420"/>
    </ligand>
</feature>
<feature type="binding site" evidence="1">
    <location>
        <position position="816"/>
    </location>
    <ligand>
        <name>Zn(2+)</name>
        <dbReference type="ChEBI" id="CHEBI:29105"/>
        <label>2</label>
    </ligand>
</feature>
<feature type="binding site" evidence="1">
    <location>
        <position position="890"/>
    </location>
    <ligand>
        <name>Zn(2+)</name>
        <dbReference type="ChEBI" id="CHEBI:29105"/>
        <label>2</label>
    </ligand>
</feature>
<feature type="binding site" evidence="1">
    <location>
        <position position="897"/>
    </location>
    <ligand>
        <name>Zn(2+)</name>
        <dbReference type="ChEBI" id="CHEBI:29105"/>
        <label>2</label>
    </ligand>
</feature>
<feature type="binding site" evidence="1">
    <location>
        <position position="900"/>
    </location>
    <ligand>
        <name>Zn(2+)</name>
        <dbReference type="ChEBI" id="CHEBI:29105"/>
        <label>2</label>
    </ligand>
</feature>
<gene>
    <name evidence="1" type="primary">rpoC</name>
    <name type="ordered locus">NGO_1850</name>
</gene>